<accession>A4JHM8</accession>
<keyword id="KW-0067">ATP-binding</keyword>
<keyword id="KW-0319">Glycerol metabolism</keyword>
<keyword id="KW-0418">Kinase</keyword>
<keyword id="KW-0547">Nucleotide-binding</keyword>
<keyword id="KW-0808">Transferase</keyword>
<feature type="chain" id="PRO_1000020714" description="Glycerol kinase">
    <location>
        <begin position="1"/>
        <end position="500"/>
    </location>
</feature>
<feature type="binding site" evidence="1">
    <location>
        <position position="13"/>
    </location>
    <ligand>
        <name>ADP</name>
        <dbReference type="ChEBI" id="CHEBI:456216"/>
    </ligand>
</feature>
<feature type="binding site" evidence="1">
    <location>
        <position position="13"/>
    </location>
    <ligand>
        <name>ATP</name>
        <dbReference type="ChEBI" id="CHEBI:30616"/>
    </ligand>
</feature>
<feature type="binding site" evidence="1">
    <location>
        <position position="13"/>
    </location>
    <ligand>
        <name>sn-glycerol 3-phosphate</name>
        <dbReference type="ChEBI" id="CHEBI:57597"/>
    </ligand>
</feature>
<feature type="binding site" evidence="1">
    <location>
        <position position="14"/>
    </location>
    <ligand>
        <name>ATP</name>
        <dbReference type="ChEBI" id="CHEBI:30616"/>
    </ligand>
</feature>
<feature type="binding site" evidence="1">
    <location>
        <position position="15"/>
    </location>
    <ligand>
        <name>ATP</name>
        <dbReference type="ChEBI" id="CHEBI:30616"/>
    </ligand>
</feature>
<feature type="binding site" evidence="1">
    <location>
        <position position="17"/>
    </location>
    <ligand>
        <name>ADP</name>
        <dbReference type="ChEBI" id="CHEBI:456216"/>
    </ligand>
</feature>
<feature type="binding site" evidence="1">
    <location>
        <position position="83"/>
    </location>
    <ligand>
        <name>glycerol</name>
        <dbReference type="ChEBI" id="CHEBI:17754"/>
    </ligand>
</feature>
<feature type="binding site" evidence="1">
    <location>
        <position position="83"/>
    </location>
    <ligand>
        <name>sn-glycerol 3-phosphate</name>
        <dbReference type="ChEBI" id="CHEBI:57597"/>
    </ligand>
</feature>
<feature type="binding site" evidence="1">
    <location>
        <position position="84"/>
    </location>
    <ligand>
        <name>glycerol</name>
        <dbReference type="ChEBI" id="CHEBI:17754"/>
    </ligand>
</feature>
<feature type="binding site" evidence="1">
    <location>
        <position position="84"/>
    </location>
    <ligand>
        <name>sn-glycerol 3-phosphate</name>
        <dbReference type="ChEBI" id="CHEBI:57597"/>
    </ligand>
</feature>
<feature type="binding site" evidence="1">
    <location>
        <position position="135"/>
    </location>
    <ligand>
        <name>glycerol</name>
        <dbReference type="ChEBI" id="CHEBI:17754"/>
    </ligand>
</feature>
<feature type="binding site" evidence="1">
    <location>
        <position position="135"/>
    </location>
    <ligand>
        <name>sn-glycerol 3-phosphate</name>
        <dbReference type="ChEBI" id="CHEBI:57597"/>
    </ligand>
</feature>
<feature type="binding site" evidence="1">
    <location>
        <position position="244"/>
    </location>
    <ligand>
        <name>glycerol</name>
        <dbReference type="ChEBI" id="CHEBI:17754"/>
    </ligand>
</feature>
<feature type="binding site" evidence="1">
    <location>
        <position position="244"/>
    </location>
    <ligand>
        <name>sn-glycerol 3-phosphate</name>
        <dbReference type="ChEBI" id="CHEBI:57597"/>
    </ligand>
</feature>
<feature type="binding site" evidence="1">
    <location>
        <position position="245"/>
    </location>
    <ligand>
        <name>glycerol</name>
        <dbReference type="ChEBI" id="CHEBI:17754"/>
    </ligand>
</feature>
<feature type="binding site" evidence="1">
    <location>
        <position position="266"/>
    </location>
    <ligand>
        <name>ADP</name>
        <dbReference type="ChEBI" id="CHEBI:456216"/>
    </ligand>
</feature>
<feature type="binding site" evidence="1">
    <location>
        <position position="266"/>
    </location>
    <ligand>
        <name>ATP</name>
        <dbReference type="ChEBI" id="CHEBI:30616"/>
    </ligand>
</feature>
<feature type="binding site" evidence="1">
    <location>
        <position position="309"/>
    </location>
    <ligand>
        <name>ADP</name>
        <dbReference type="ChEBI" id="CHEBI:456216"/>
    </ligand>
</feature>
<feature type="binding site" evidence="1">
    <location>
        <position position="309"/>
    </location>
    <ligand>
        <name>ATP</name>
        <dbReference type="ChEBI" id="CHEBI:30616"/>
    </ligand>
</feature>
<feature type="binding site" evidence="1">
    <location>
        <position position="313"/>
    </location>
    <ligand>
        <name>ATP</name>
        <dbReference type="ChEBI" id="CHEBI:30616"/>
    </ligand>
</feature>
<feature type="binding site" evidence="1">
    <location>
        <position position="410"/>
    </location>
    <ligand>
        <name>ADP</name>
        <dbReference type="ChEBI" id="CHEBI:456216"/>
    </ligand>
</feature>
<feature type="binding site" evidence="1">
    <location>
        <position position="410"/>
    </location>
    <ligand>
        <name>ATP</name>
        <dbReference type="ChEBI" id="CHEBI:30616"/>
    </ligand>
</feature>
<feature type="binding site" evidence="1">
    <location>
        <position position="414"/>
    </location>
    <ligand>
        <name>ADP</name>
        <dbReference type="ChEBI" id="CHEBI:456216"/>
    </ligand>
</feature>
<sequence length="500" mass="54753">MQDQYILALDQGTTSSRAMLFDRQGNIVSIAQKEFEQIYPQPGWVEHDPQEIWSTQAGVAAEAVTRTGLNGTSIAAIGITNQRETTIVWDRETGQPVYNAIVWQDRRTADFCDSLKQQGLEAKVRAKTGLPIDSYFSATKIRWILDNVPGARDKARQGKLAFGTVDSWLVWNFTKHELHVTDVTNASRTMLFNIHTREWDSELLELLDIPRSMLPEVKASSEIYGHTKTTVFASKIPLAGIAGDQHAALFGQMCTTSGMVKNTYGTGCFLMMNTGDKPIESRNNLVTTIAWQIGDDVQYALEGSIFIAGAVVQWLRDGMGIIKTAAEIEALAARVPHTDGVYLVPAFAGLGAPHWNARARGSVFGVTRGTTSAHLARAALDAIAYQSLDVLAAMEADSGISIGELRVDGGASANNLLMQFQADLLGVDAVRPQITETTALGAAYLAGLAIGYWKNLDEVRSQWQLDRRFSPSMPKEQVKQCMAGWQRAVRAAKAWADDTQ</sequence>
<organism>
    <name type="scientific">Burkholderia vietnamiensis (strain G4 / LMG 22486)</name>
    <name type="common">Burkholderia cepacia (strain R1808)</name>
    <dbReference type="NCBI Taxonomy" id="269482"/>
    <lineage>
        <taxon>Bacteria</taxon>
        <taxon>Pseudomonadati</taxon>
        <taxon>Pseudomonadota</taxon>
        <taxon>Betaproteobacteria</taxon>
        <taxon>Burkholderiales</taxon>
        <taxon>Burkholderiaceae</taxon>
        <taxon>Burkholderia</taxon>
        <taxon>Burkholderia cepacia complex</taxon>
    </lineage>
</organism>
<reference key="1">
    <citation type="submission" date="2007-03" db="EMBL/GenBank/DDBJ databases">
        <title>Complete sequence of chromosome 1 of Burkholderia vietnamiensis G4.</title>
        <authorList>
            <consortium name="US DOE Joint Genome Institute"/>
            <person name="Copeland A."/>
            <person name="Lucas S."/>
            <person name="Lapidus A."/>
            <person name="Barry K."/>
            <person name="Detter J.C."/>
            <person name="Glavina del Rio T."/>
            <person name="Hammon N."/>
            <person name="Israni S."/>
            <person name="Dalin E."/>
            <person name="Tice H."/>
            <person name="Pitluck S."/>
            <person name="Chain P."/>
            <person name="Malfatti S."/>
            <person name="Shin M."/>
            <person name="Vergez L."/>
            <person name="Schmutz J."/>
            <person name="Larimer F."/>
            <person name="Land M."/>
            <person name="Hauser L."/>
            <person name="Kyrpides N."/>
            <person name="Tiedje J."/>
            <person name="Richardson P."/>
        </authorList>
    </citation>
    <scope>NUCLEOTIDE SEQUENCE [LARGE SCALE GENOMIC DNA]</scope>
    <source>
        <strain>G4 / LMG 22486</strain>
    </source>
</reference>
<protein>
    <recommendedName>
        <fullName evidence="1">Glycerol kinase</fullName>
        <ecNumber evidence="1">2.7.1.30</ecNumber>
    </recommendedName>
    <alternativeName>
        <fullName evidence="1">ATP:glycerol 3-phosphotransferase</fullName>
    </alternativeName>
    <alternativeName>
        <fullName evidence="1">Glycerokinase</fullName>
        <shortName evidence="1">GK</shortName>
    </alternativeName>
</protein>
<evidence type="ECO:0000255" key="1">
    <source>
        <dbReference type="HAMAP-Rule" id="MF_00186"/>
    </source>
</evidence>
<proteinExistence type="inferred from homology"/>
<comment type="function">
    <text evidence="1">Key enzyme in the regulation of glycerol uptake and metabolism. Catalyzes the phosphorylation of glycerol to yield sn-glycerol 3-phosphate.</text>
</comment>
<comment type="catalytic activity">
    <reaction evidence="1">
        <text>glycerol + ATP = sn-glycerol 3-phosphate + ADP + H(+)</text>
        <dbReference type="Rhea" id="RHEA:21644"/>
        <dbReference type="ChEBI" id="CHEBI:15378"/>
        <dbReference type="ChEBI" id="CHEBI:17754"/>
        <dbReference type="ChEBI" id="CHEBI:30616"/>
        <dbReference type="ChEBI" id="CHEBI:57597"/>
        <dbReference type="ChEBI" id="CHEBI:456216"/>
        <dbReference type="EC" id="2.7.1.30"/>
    </reaction>
</comment>
<comment type="activity regulation">
    <text evidence="1">Inhibited by fructose 1,6-bisphosphate (FBP).</text>
</comment>
<comment type="pathway">
    <text evidence="1">Polyol metabolism; glycerol degradation via glycerol kinase pathway; sn-glycerol 3-phosphate from glycerol: step 1/1.</text>
</comment>
<comment type="similarity">
    <text evidence="1">Belongs to the FGGY kinase family.</text>
</comment>
<dbReference type="EC" id="2.7.1.30" evidence="1"/>
<dbReference type="EMBL" id="CP000614">
    <property type="protein sequence ID" value="ABO55781.1"/>
    <property type="molecule type" value="Genomic_DNA"/>
</dbReference>
<dbReference type="SMR" id="A4JHM8"/>
<dbReference type="KEGG" id="bvi:Bcep1808_2790"/>
<dbReference type="eggNOG" id="COG0554">
    <property type="taxonomic scope" value="Bacteria"/>
</dbReference>
<dbReference type="HOGENOM" id="CLU_009281_2_3_4"/>
<dbReference type="UniPathway" id="UPA00618">
    <property type="reaction ID" value="UER00672"/>
</dbReference>
<dbReference type="Proteomes" id="UP000002287">
    <property type="component" value="Chromosome 1"/>
</dbReference>
<dbReference type="GO" id="GO:0005829">
    <property type="term" value="C:cytosol"/>
    <property type="evidence" value="ECO:0007669"/>
    <property type="project" value="TreeGrafter"/>
</dbReference>
<dbReference type="GO" id="GO:0005524">
    <property type="term" value="F:ATP binding"/>
    <property type="evidence" value="ECO:0007669"/>
    <property type="project" value="UniProtKB-UniRule"/>
</dbReference>
<dbReference type="GO" id="GO:0004370">
    <property type="term" value="F:glycerol kinase activity"/>
    <property type="evidence" value="ECO:0000250"/>
    <property type="project" value="UniProtKB"/>
</dbReference>
<dbReference type="GO" id="GO:0019563">
    <property type="term" value="P:glycerol catabolic process"/>
    <property type="evidence" value="ECO:0007669"/>
    <property type="project" value="UniProtKB-UniRule"/>
</dbReference>
<dbReference type="GO" id="GO:0006071">
    <property type="term" value="P:glycerol metabolic process"/>
    <property type="evidence" value="ECO:0000250"/>
    <property type="project" value="UniProtKB"/>
</dbReference>
<dbReference type="GO" id="GO:0006072">
    <property type="term" value="P:glycerol-3-phosphate metabolic process"/>
    <property type="evidence" value="ECO:0007669"/>
    <property type="project" value="InterPro"/>
</dbReference>
<dbReference type="CDD" id="cd07786">
    <property type="entry name" value="FGGY_EcGK_like"/>
    <property type="match status" value="1"/>
</dbReference>
<dbReference type="FunFam" id="3.30.420.40:FF:000007">
    <property type="entry name" value="Glycerol kinase"/>
    <property type="match status" value="1"/>
</dbReference>
<dbReference type="FunFam" id="3.30.420.40:FF:000008">
    <property type="entry name" value="Glycerol kinase"/>
    <property type="match status" value="1"/>
</dbReference>
<dbReference type="Gene3D" id="3.30.420.40">
    <property type="match status" value="2"/>
</dbReference>
<dbReference type="HAMAP" id="MF_00186">
    <property type="entry name" value="Glycerol_kin"/>
    <property type="match status" value="1"/>
</dbReference>
<dbReference type="InterPro" id="IPR043129">
    <property type="entry name" value="ATPase_NBD"/>
</dbReference>
<dbReference type="InterPro" id="IPR000577">
    <property type="entry name" value="Carb_kinase_FGGY"/>
</dbReference>
<dbReference type="InterPro" id="IPR018483">
    <property type="entry name" value="Carb_kinase_FGGY_CS"/>
</dbReference>
<dbReference type="InterPro" id="IPR018485">
    <property type="entry name" value="FGGY_C"/>
</dbReference>
<dbReference type="InterPro" id="IPR018484">
    <property type="entry name" value="FGGY_N"/>
</dbReference>
<dbReference type="InterPro" id="IPR005999">
    <property type="entry name" value="Glycerol_kin"/>
</dbReference>
<dbReference type="NCBIfam" id="TIGR01311">
    <property type="entry name" value="glycerol_kin"/>
    <property type="match status" value="1"/>
</dbReference>
<dbReference type="NCBIfam" id="NF000756">
    <property type="entry name" value="PRK00047.1"/>
    <property type="match status" value="1"/>
</dbReference>
<dbReference type="PANTHER" id="PTHR10196:SF69">
    <property type="entry name" value="GLYCEROL KINASE"/>
    <property type="match status" value="1"/>
</dbReference>
<dbReference type="PANTHER" id="PTHR10196">
    <property type="entry name" value="SUGAR KINASE"/>
    <property type="match status" value="1"/>
</dbReference>
<dbReference type="Pfam" id="PF02782">
    <property type="entry name" value="FGGY_C"/>
    <property type="match status" value="1"/>
</dbReference>
<dbReference type="Pfam" id="PF00370">
    <property type="entry name" value="FGGY_N"/>
    <property type="match status" value="1"/>
</dbReference>
<dbReference type="PIRSF" id="PIRSF000538">
    <property type="entry name" value="GlpK"/>
    <property type="match status" value="1"/>
</dbReference>
<dbReference type="SUPFAM" id="SSF53067">
    <property type="entry name" value="Actin-like ATPase domain"/>
    <property type="match status" value="2"/>
</dbReference>
<dbReference type="PROSITE" id="PS00933">
    <property type="entry name" value="FGGY_KINASES_1"/>
    <property type="match status" value="1"/>
</dbReference>
<dbReference type="PROSITE" id="PS00445">
    <property type="entry name" value="FGGY_KINASES_2"/>
    <property type="match status" value="1"/>
</dbReference>
<gene>
    <name evidence="1" type="primary">glpK</name>
    <name type="ordered locus">Bcep1808_2790</name>
</gene>
<name>GLPK_BURVG</name>